<accession>Q02G60</accession>
<gene>
    <name evidence="1" type="primary">rlmG</name>
    <name type="ordered locus">PA14_61090</name>
</gene>
<proteinExistence type="inferred from homology"/>
<protein>
    <recommendedName>
        <fullName evidence="1">Ribosomal RNA large subunit methyltransferase G</fullName>
        <ecNumber evidence="1">2.1.1.174</ecNumber>
    </recommendedName>
    <alternativeName>
        <fullName evidence="1">23S rRNA m2G1835 methyltransferase</fullName>
    </alternativeName>
    <alternativeName>
        <fullName evidence="1">rRNA (guanine-N(2)-)-methyltransferase RlmG</fullName>
    </alternativeName>
</protein>
<organism>
    <name type="scientific">Pseudomonas aeruginosa (strain UCBPP-PA14)</name>
    <dbReference type="NCBI Taxonomy" id="208963"/>
    <lineage>
        <taxon>Bacteria</taxon>
        <taxon>Pseudomonadati</taxon>
        <taxon>Pseudomonadota</taxon>
        <taxon>Gammaproteobacteria</taxon>
        <taxon>Pseudomonadales</taxon>
        <taxon>Pseudomonadaceae</taxon>
        <taxon>Pseudomonas</taxon>
    </lineage>
</organism>
<reference key="1">
    <citation type="journal article" date="2006" name="Genome Biol.">
        <title>Genomic analysis reveals that Pseudomonas aeruginosa virulence is combinatorial.</title>
        <authorList>
            <person name="Lee D.G."/>
            <person name="Urbach J.M."/>
            <person name="Wu G."/>
            <person name="Liberati N.T."/>
            <person name="Feinbaum R.L."/>
            <person name="Miyata S."/>
            <person name="Diggins L.T."/>
            <person name="He J."/>
            <person name="Saucier M."/>
            <person name="Deziel E."/>
            <person name="Friedman L."/>
            <person name="Li L."/>
            <person name="Grills G."/>
            <person name="Montgomery K."/>
            <person name="Kucherlapati R."/>
            <person name="Rahme L.G."/>
            <person name="Ausubel F.M."/>
        </authorList>
    </citation>
    <scope>NUCLEOTIDE SEQUENCE [LARGE SCALE GENOMIC DNA]</scope>
    <source>
        <strain>UCBPP-PA14</strain>
    </source>
</reference>
<name>RLMG_PSEAB</name>
<sequence length="374" mass="40506">MPLFATPFAQLDLVRQPEQDGEPLQAFDAADEYLLNQLHERGVTAQCRVLVLNDAFGALAASLAPHVQVTSSGDSHLGFLALRKNLARNGLDLGSVRFVPASETAVGPFDHVLVKVPKTLALLEEQLIRLHGQLAPGAQVVAAGMVKHLPRAAGDLLERYIGPMHASLAVKKARLLIAEAAERPQPRSPYPTRYRLEQPPLTLLNHANVFCREGLDIGTRAFLPHLPRSLGALRAADLGCGNGVLGIAYALLNPQAELTLVDESYMAVQSARENWRAALGERPATFRADDGLAGQAAGSLDLVLCNPPFHQQQVVGDFLAWRMFLQARDALAAGGELWIVGNRHLGYHAKLKRLFRGVEQVAANPKFVILKAGK</sequence>
<feature type="chain" id="PRO_0000366474" description="Ribosomal RNA large subunit methyltransferase G">
    <location>
        <begin position="1"/>
        <end position="374"/>
    </location>
</feature>
<keyword id="KW-0963">Cytoplasm</keyword>
<keyword id="KW-0489">Methyltransferase</keyword>
<keyword id="KW-0698">rRNA processing</keyword>
<keyword id="KW-0949">S-adenosyl-L-methionine</keyword>
<keyword id="KW-0808">Transferase</keyword>
<comment type="function">
    <text evidence="1">Specifically methylates the guanine in position 1835 (m2G1835) of 23S rRNA.</text>
</comment>
<comment type="catalytic activity">
    <reaction evidence="1">
        <text>guanosine(1835) in 23S rRNA + S-adenosyl-L-methionine = N(2)-methylguanosine(1835) in 23S rRNA + S-adenosyl-L-homocysteine + H(+)</text>
        <dbReference type="Rhea" id="RHEA:42744"/>
        <dbReference type="Rhea" id="RHEA-COMP:10217"/>
        <dbReference type="Rhea" id="RHEA-COMP:10218"/>
        <dbReference type="ChEBI" id="CHEBI:15378"/>
        <dbReference type="ChEBI" id="CHEBI:57856"/>
        <dbReference type="ChEBI" id="CHEBI:59789"/>
        <dbReference type="ChEBI" id="CHEBI:74269"/>
        <dbReference type="ChEBI" id="CHEBI:74481"/>
        <dbReference type="EC" id="2.1.1.174"/>
    </reaction>
</comment>
<comment type="subcellular location">
    <subcellularLocation>
        <location evidence="1">Cytoplasm</location>
    </subcellularLocation>
</comment>
<comment type="similarity">
    <text evidence="1">Belongs to the methyltransferase superfamily. RlmG family.</text>
</comment>
<dbReference type="EC" id="2.1.1.174" evidence="1"/>
<dbReference type="EMBL" id="CP000438">
    <property type="protein sequence ID" value="ABJ13995.1"/>
    <property type="molecule type" value="Genomic_DNA"/>
</dbReference>
<dbReference type="RefSeq" id="WP_003121341.1">
    <property type="nucleotide sequence ID" value="NZ_CP034244.1"/>
</dbReference>
<dbReference type="SMR" id="Q02G60"/>
<dbReference type="KEGG" id="pau:PA14_61090"/>
<dbReference type="PseudoCAP" id="PA14_61090"/>
<dbReference type="HOGENOM" id="CLU_040288_4_0_6"/>
<dbReference type="BioCyc" id="PAER208963:G1G74-5164-MONOMER"/>
<dbReference type="Proteomes" id="UP000000653">
    <property type="component" value="Chromosome"/>
</dbReference>
<dbReference type="GO" id="GO:0005737">
    <property type="term" value="C:cytoplasm"/>
    <property type="evidence" value="ECO:0007669"/>
    <property type="project" value="UniProtKB-SubCell"/>
</dbReference>
<dbReference type="GO" id="GO:0052916">
    <property type="term" value="F:23S rRNA (guanine(1835)-N(2))-methyltransferase activity"/>
    <property type="evidence" value="ECO:0007669"/>
    <property type="project" value="UniProtKB-EC"/>
</dbReference>
<dbReference type="GO" id="GO:0003676">
    <property type="term" value="F:nucleic acid binding"/>
    <property type="evidence" value="ECO:0007669"/>
    <property type="project" value="InterPro"/>
</dbReference>
<dbReference type="CDD" id="cd02440">
    <property type="entry name" value="AdoMet_MTases"/>
    <property type="match status" value="1"/>
</dbReference>
<dbReference type="Gene3D" id="3.40.50.150">
    <property type="entry name" value="Vaccinia Virus protein VP39"/>
    <property type="match status" value="2"/>
</dbReference>
<dbReference type="HAMAP" id="MF_01859">
    <property type="entry name" value="23SrRNA_methyltr_G"/>
    <property type="match status" value="1"/>
</dbReference>
<dbReference type="InterPro" id="IPR002052">
    <property type="entry name" value="DNA_methylase_N6_adenine_CS"/>
</dbReference>
<dbReference type="InterPro" id="IPR017237">
    <property type="entry name" value="rRNA_m2G-MeTrfase_RlmG"/>
</dbReference>
<dbReference type="InterPro" id="IPR046977">
    <property type="entry name" value="RsmC/RlmG"/>
</dbReference>
<dbReference type="InterPro" id="IPR029063">
    <property type="entry name" value="SAM-dependent_MTases_sf"/>
</dbReference>
<dbReference type="InterPro" id="IPR007848">
    <property type="entry name" value="Small_mtfrase_dom"/>
</dbReference>
<dbReference type="PANTHER" id="PTHR47816:SF5">
    <property type="entry name" value="RIBOSOMAL RNA LARGE SUBUNIT METHYLTRANSFERASE G"/>
    <property type="match status" value="1"/>
</dbReference>
<dbReference type="PANTHER" id="PTHR47816">
    <property type="entry name" value="RIBOSOMAL RNA SMALL SUBUNIT METHYLTRANSFERASE C"/>
    <property type="match status" value="1"/>
</dbReference>
<dbReference type="Pfam" id="PF05175">
    <property type="entry name" value="MTS"/>
    <property type="match status" value="1"/>
</dbReference>
<dbReference type="PIRSF" id="PIRSF037565">
    <property type="entry name" value="RRNA_m2G_Mtase_RsmD_prd"/>
    <property type="match status" value="1"/>
</dbReference>
<dbReference type="SUPFAM" id="SSF53335">
    <property type="entry name" value="S-adenosyl-L-methionine-dependent methyltransferases"/>
    <property type="match status" value="2"/>
</dbReference>
<evidence type="ECO:0000255" key="1">
    <source>
        <dbReference type="HAMAP-Rule" id="MF_01859"/>
    </source>
</evidence>